<accession>B1YI33</accession>
<name>KCY_EXIS2</name>
<feature type="chain" id="PRO_1000100664" description="Cytidylate kinase">
    <location>
        <begin position="1"/>
        <end position="223"/>
    </location>
</feature>
<feature type="binding site" evidence="1">
    <location>
        <begin position="10"/>
        <end position="18"/>
    </location>
    <ligand>
        <name>ATP</name>
        <dbReference type="ChEBI" id="CHEBI:30616"/>
    </ligand>
</feature>
<protein>
    <recommendedName>
        <fullName evidence="1">Cytidylate kinase</fullName>
        <shortName evidence="1">CK</shortName>
        <ecNumber evidence="1">2.7.4.25</ecNumber>
    </recommendedName>
    <alternativeName>
        <fullName evidence="1">Cytidine monophosphate kinase</fullName>
        <shortName evidence="1">CMP kinase</shortName>
    </alternativeName>
</protein>
<proteinExistence type="inferred from homology"/>
<gene>
    <name evidence="1" type="primary">cmk</name>
    <name type="ordered locus">Exig_1808</name>
</gene>
<evidence type="ECO:0000255" key="1">
    <source>
        <dbReference type="HAMAP-Rule" id="MF_00238"/>
    </source>
</evidence>
<reference key="1">
    <citation type="submission" date="2008-04" db="EMBL/GenBank/DDBJ databases">
        <title>Complete sequence of chromosome of Exiguobacterium sibiricum 255-15.</title>
        <authorList>
            <consortium name="US DOE Joint Genome Institute"/>
            <person name="Copeland A."/>
            <person name="Lucas S."/>
            <person name="Lapidus A."/>
            <person name="Glavina del Rio T."/>
            <person name="Dalin E."/>
            <person name="Tice H."/>
            <person name="Bruce D."/>
            <person name="Goodwin L."/>
            <person name="Pitluck S."/>
            <person name="Kiss H."/>
            <person name="Chertkov O."/>
            <person name="Monk C."/>
            <person name="Brettin T."/>
            <person name="Detter J.C."/>
            <person name="Han C."/>
            <person name="Kuske C.R."/>
            <person name="Schmutz J."/>
            <person name="Larimer F."/>
            <person name="Land M."/>
            <person name="Hauser L."/>
            <person name="Kyrpides N."/>
            <person name="Mikhailova N."/>
            <person name="Vishnivetskaya T."/>
            <person name="Rodrigues D.F."/>
            <person name="Gilichinsky D."/>
            <person name="Tiedje J."/>
            <person name="Richardson P."/>
        </authorList>
    </citation>
    <scope>NUCLEOTIDE SEQUENCE [LARGE SCALE GENOMIC DNA]</scope>
    <source>
        <strain>DSM 17290 / CCUG 55495 / CIP 109462 / JCM 13490 / 255-15</strain>
    </source>
</reference>
<comment type="catalytic activity">
    <reaction evidence="1">
        <text>CMP + ATP = CDP + ADP</text>
        <dbReference type="Rhea" id="RHEA:11600"/>
        <dbReference type="ChEBI" id="CHEBI:30616"/>
        <dbReference type="ChEBI" id="CHEBI:58069"/>
        <dbReference type="ChEBI" id="CHEBI:60377"/>
        <dbReference type="ChEBI" id="CHEBI:456216"/>
        <dbReference type="EC" id="2.7.4.25"/>
    </reaction>
</comment>
<comment type="catalytic activity">
    <reaction evidence="1">
        <text>dCMP + ATP = dCDP + ADP</text>
        <dbReference type="Rhea" id="RHEA:25094"/>
        <dbReference type="ChEBI" id="CHEBI:30616"/>
        <dbReference type="ChEBI" id="CHEBI:57566"/>
        <dbReference type="ChEBI" id="CHEBI:58593"/>
        <dbReference type="ChEBI" id="CHEBI:456216"/>
        <dbReference type="EC" id="2.7.4.25"/>
    </reaction>
</comment>
<comment type="subcellular location">
    <subcellularLocation>
        <location evidence="1">Cytoplasm</location>
    </subcellularLocation>
</comment>
<comment type="similarity">
    <text evidence="1">Belongs to the cytidylate kinase family. Type 1 subfamily.</text>
</comment>
<keyword id="KW-0067">ATP-binding</keyword>
<keyword id="KW-0963">Cytoplasm</keyword>
<keyword id="KW-0418">Kinase</keyword>
<keyword id="KW-0547">Nucleotide-binding</keyword>
<keyword id="KW-1185">Reference proteome</keyword>
<keyword id="KW-0808">Transferase</keyword>
<organism>
    <name type="scientific">Exiguobacterium sibiricum (strain DSM 17290 / CCUG 55495 / CIP 109462 / JCM 13490 / 255-15)</name>
    <dbReference type="NCBI Taxonomy" id="262543"/>
    <lineage>
        <taxon>Bacteria</taxon>
        <taxon>Bacillati</taxon>
        <taxon>Bacillota</taxon>
        <taxon>Bacilli</taxon>
        <taxon>Bacillales</taxon>
        <taxon>Bacillales Family XII. Incertae Sedis</taxon>
        <taxon>Exiguobacterium</taxon>
    </lineage>
</organism>
<dbReference type="EC" id="2.7.4.25" evidence="1"/>
<dbReference type="EMBL" id="CP001022">
    <property type="protein sequence ID" value="ACB61260.1"/>
    <property type="molecule type" value="Genomic_DNA"/>
</dbReference>
<dbReference type="RefSeq" id="WP_012370678.1">
    <property type="nucleotide sequence ID" value="NC_010556.1"/>
</dbReference>
<dbReference type="SMR" id="B1YI33"/>
<dbReference type="STRING" id="262543.Exig_1808"/>
<dbReference type="KEGG" id="esi:Exig_1808"/>
<dbReference type="eggNOG" id="COG0283">
    <property type="taxonomic scope" value="Bacteria"/>
</dbReference>
<dbReference type="HOGENOM" id="CLU_079959_0_2_9"/>
<dbReference type="OrthoDB" id="9807434at2"/>
<dbReference type="Proteomes" id="UP000001681">
    <property type="component" value="Chromosome"/>
</dbReference>
<dbReference type="GO" id="GO:0005829">
    <property type="term" value="C:cytosol"/>
    <property type="evidence" value="ECO:0007669"/>
    <property type="project" value="TreeGrafter"/>
</dbReference>
<dbReference type="GO" id="GO:0005524">
    <property type="term" value="F:ATP binding"/>
    <property type="evidence" value="ECO:0007669"/>
    <property type="project" value="UniProtKB-UniRule"/>
</dbReference>
<dbReference type="GO" id="GO:0036430">
    <property type="term" value="F:CMP kinase activity"/>
    <property type="evidence" value="ECO:0007669"/>
    <property type="project" value="RHEA"/>
</dbReference>
<dbReference type="GO" id="GO:0036431">
    <property type="term" value="F:dCMP kinase activity"/>
    <property type="evidence" value="ECO:0007669"/>
    <property type="project" value="RHEA"/>
</dbReference>
<dbReference type="GO" id="GO:0015949">
    <property type="term" value="P:nucleobase-containing small molecule interconversion"/>
    <property type="evidence" value="ECO:0007669"/>
    <property type="project" value="TreeGrafter"/>
</dbReference>
<dbReference type="GO" id="GO:0006220">
    <property type="term" value="P:pyrimidine nucleotide metabolic process"/>
    <property type="evidence" value="ECO:0007669"/>
    <property type="project" value="UniProtKB-UniRule"/>
</dbReference>
<dbReference type="CDD" id="cd02020">
    <property type="entry name" value="CMPK"/>
    <property type="match status" value="1"/>
</dbReference>
<dbReference type="Gene3D" id="3.40.50.300">
    <property type="entry name" value="P-loop containing nucleotide triphosphate hydrolases"/>
    <property type="match status" value="1"/>
</dbReference>
<dbReference type="HAMAP" id="MF_00238">
    <property type="entry name" value="Cytidyl_kinase_type1"/>
    <property type="match status" value="1"/>
</dbReference>
<dbReference type="InterPro" id="IPR003136">
    <property type="entry name" value="Cytidylate_kin"/>
</dbReference>
<dbReference type="InterPro" id="IPR011994">
    <property type="entry name" value="Cytidylate_kinase_dom"/>
</dbReference>
<dbReference type="InterPro" id="IPR027417">
    <property type="entry name" value="P-loop_NTPase"/>
</dbReference>
<dbReference type="NCBIfam" id="TIGR00017">
    <property type="entry name" value="cmk"/>
    <property type="match status" value="1"/>
</dbReference>
<dbReference type="PANTHER" id="PTHR21299:SF2">
    <property type="entry name" value="CYTIDYLATE KINASE"/>
    <property type="match status" value="1"/>
</dbReference>
<dbReference type="PANTHER" id="PTHR21299">
    <property type="entry name" value="CYTIDYLATE KINASE/PANTOATE-BETA-ALANINE LIGASE"/>
    <property type="match status" value="1"/>
</dbReference>
<dbReference type="Pfam" id="PF02224">
    <property type="entry name" value="Cytidylate_kin"/>
    <property type="match status" value="1"/>
</dbReference>
<dbReference type="SUPFAM" id="SSF52540">
    <property type="entry name" value="P-loop containing nucleoside triphosphate hydrolases"/>
    <property type="match status" value="1"/>
</dbReference>
<sequence length="223" mass="24411">MKKIQIALDGPAGAGKSTIAKQLASHLDYVYIDTGAMYRAVTLAALEQGLDLENGPVLGELMKSLDIRLTPGEQGQRVFIGEREVTDAIRTNEVTNNVSFVARQAEVRSALVIAQRKLAERGGIVMDGRDIGTVVLPEAELKVFLTASVEERASRRHRENIARGMDSDLKGLQDEIALRDKRDSERTVSPLKQADDAIYLDTTELNIDQVVARLTELAEGALK</sequence>